<organism>
    <name type="scientific">Candida albicans (strain SC5314 / ATCC MYA-2876)</name>
    <name type="common">Yeast</name>
    <dbReference type="NCBI Taxonomy" id="237561"/>
    <lineage>
        <taxon>Eukaryota</taxon>
        <taxon>Fungi</taxon>
        <taxon>Dikarya</taxon>
        <taxon>Ascomycota</taxon>
        <taxon>Saccharomycotina</taxon>
        <taxon>Pichiomycetes</taxon>
        <taxon>Debaryomycetaceae</taxon>
        <taxon>Candida/Lodderomyces clade</taxon>
        <taxon>Candida</taxon>
    </lineage>
</organism>
<reference key="1">
    <citation type="journal article" date="2004" name="Proc. Natl. Acad. Sci. U.S.A.">
        <title>The diploid genome sequence of Candida albicans.</title>
        <authorList>
            <person name="Jones T."/>
            <person name="Federspiel N.A."/>
            <person name="Chibana H."/>
            <person name="Dungan J."/>
            <person name="Kalman S."/>
            <person name="Magee B.B."/>
            <person name="Newport G."/>
            <person name="Thorstenson Y.R."/>
            <person name="Agabian N."/>
            <person name="Magee P.T."/>
            <person name="Davis R.W."/>
            <person name="Scherer S."/>
        </authorList>
    </citation>
    <scope>NUCLEOTIDE SEQUENCE [LARGE SCALE GENOMIC DNA]</scope>
    <source>
        <strain>SC5314 / ATCC MYA-2876</strain>
    </source>
</reference>
<reference key="2">
    <citation type="journal article" date="2007" name="Genome Biol.">
        <title>Assembly of the Candida albicans genome into sixteen supercontigs aligned on the eight chromosomes.</title>
        <authorList>
            <person name="van het Hoog M."/>
            <person name="Rast T.J."/>
            <person name="Martchenko M."/>
            <person name="Grindle S."/>
            <person name="Dignard D."/>
            <person name="Hogues H."/>
            <person name="Cuomo C."/>
            <person name="Berriman M."/>
            <person name="Scherer S."/>
            <person name="Magee B.B."/>
            <person name="Whiteway M."/>
            <person name="Chibana H."/>
            <person name="Nantel A."/>
            <person name="Magee P.T."/>
        </authorList>
    </citation>
    <scope>GENOME REANNOTATION</scope>
    <source>
        <strain>SC5314 / ATCC MYA-2876</strain>
    </source>
</reference>
<reference key="3">
    <citation type="journal article" date="2013" name="Genome Biol.">
        <title>Assembly of a phased diploid Candida albicans genome facilitates allele-specific measurements and provides a simple model for repeat and indel structure.</title>
        <authorList>
            <person name="Muzzey D."/>
            <person name="Schwartz K."/>
            <person name="Weissman J.S."/>
            <person name="Sherlock G."/>
        </authorList>
    </citation>
    <scope>NUCLEOTIDE SEQUENCE [LARGE SCALE GENOMIC DNA]</scope>
    <scope>GENOME REANNOTATION</scope>
    <source>
        <strain>SC5314 / ATCC MYA-2876</strain>
    </source>
</reference>
<reference key="4">
    <citation type="journal article" date="2011" name="J. Biol. Chem.">
        <title>Histatin 5 uptake by Candida albicans utilizes polyamine transporters Dur3 and Dur31 proteins.</title>
        <authorList>
            <person name="Kumar R."/>
            <person name="Chadha S."/>
            <person name="Saraswat D."/>
            <person name="Bajwa J.S."/>
            <person name="Li R.A."/>
            <person name="Conti H.R."/>
            <person name="Edgerton M."/>
        </authorList>
    </citation>
    <scope>FUNCTION</scope>
    <scope>DISRUPTION PHENOTYPE</scope>
    <scope>TRANSPORTER ACTIVITY</scope>
</reference>
<reference key="5">
    <citation type="journal article" date="2013" name="PLoS ONE">
        <title>Histatin 5 resistance of Candida glabrata can be reversed by insertion of Candida albicans polyamine transporter-encoding genes DUR3 and DUR31.</title>
        <authorList>
            <person name="Tati S."/>
            <person name="Jang W.S."/>
            <person name="Li R."/>
            <person name="Kumar R."/>
            <person name="Puri S."/>
            <person name="Edgerton M."/>
        </authorList>
    </citation>
    <scope>FUNCTION</scope>
</reference>
<reference key="6">
    <citation type="journal article" date="2014" name="Antimicrob. Agents Chemother.">
        <title>Histatin 5-spermidine conjugates have enhanced fungicidal activity and efficacy as a topical therapeutic for oral candidiasis.</title>
        <authorList>
            <person name="Tati S."/>
            <person name="Li R."/>
            <person name="Puri S."/>
            <person name="Kumar R."/>
            <person name="Davidow P."/>
            <person name="Edgerton M."/>
        </authorList>
    </citation>
    <scope>FUNCTION</scope>
    <scope>DISRUPTION PHENOTYPE</scope>
</reference>
<dbReference type="EMBL" id="CP017627">
    <property type="protein sequence ID" value="AOW29760.1"/>
    <property type="molecule type" value="Genomic_DNA"/>
</dbReference>
<dbReference type="RefSeq" id="XP_711409.1">
    <property type="nucleotide sequence ID" value="XM_706317.1"/>
</dbReference>
<dbReference type="SMR" id="A0A1D8PNR5"/>
<dbReference type="STRING" id="237561.A0A1D8PNR5"/>
<dbReference type="EnsemblFungi" id="C5_03480C_A-T">
    <property type="protein sequence ID" value="C5_03480C_A-T-p1"/>
    <property type="gene ID" value="C5_03480C_A"/>
</dbReference>
<dbReference type="GeneID" id="3646965"/>
<dbReference type="KEGG" id="cal:CAALFM_C503480CA"/>
<dbReference type="CGD" id="CAL0000179770">
    <property type="gene designation" value="orf19.6656"/>
</dbReference>
<dbReference type="VEuPathDB" id="FungiDB:C5_03480C_A"/>
<dbReference type="eggNOG" id="KOG2348">
    <property type="taxonomic scope" value="Eukaryota"/>
</dbReference>
<dbReference type="InParanoid" id="A0A1D8PNR5"/>
<dbReference type="OMA" id="NIWYIRA"/>
<dbReference type="OrthoDB" id="6132759at2759"/>
<dbReference type="Proteomes" id="UP000000559">
    <property type="component" value="Chromosome 5"/>
</dbReference>
<dbReference type="GO" id="GO:0005886">
    <property type="term" value="C:plasma membrane"/>
    <property type="evidence" value="ECO:0000318"/>
    <property type="project" value="GO_Central"/>
</dbReference>
<dbReference type="GO" id="GO:0015606">
    <property type="term" value="F:spermidine transmembrane transporter activity"/>
    <property type="evidence" value="ECO:0000315"/>
    <property type="project" value="CGD"/>
</dbReference>
<dbReference type="GO" id="GO:0071248">
    <property type="term" value="P:cellular response to metal ion"/>
    <property type="evidence" value="ECO:0000315"/>
    <property type="project" value="CGD"/>
</dbReference>
<dbReference type="GO" id="GO:0009267">
    <property type="term" value="P:cellular response to starvation"/>
    <property type="evidence" value="ECO:0000315"/>
    <property type="project" value="CGD"/>
</dbReference>
<dbReference type="GO" id="GO:0030447">
    <property type="term" value="P:filamentous growth"/>
    <property type="evidence" value="ECO:0000315"/>
    <property type="project" value="CGD"/>
</dbReference>
<dbReference type="GO" id="GO:0044182">
    <property type="term" value="P:filamentous growth of a population of unicellular organisms"/>
    <property type="evidence" value="ECO:0000315"/>
    <property type="project" value="CGD"/>
</dbReference>
<dbReference type="GO" id="GO:0036180">
    <property type="term" value="P:filamentous growth of a population of unicellular organisms in response to biotic stimulus"/>
    <property type="evidence" value="ECO:0000315"/>
    <property type="project" value="CGD"/>
</dbReference>
<dbReference type="GO" id="GO:0036170">
    <property type="term" value="P:filamentous growth of a population of unicellular organisms in response to starvation"/>
    <property type="evidence" value="ECO:0000315"/>
    <property type="project" value="CGD"/>
</dbReference>
<dbReference type="GO" id="GO:0051454">
    <property type="term" value="P:intracellular pH elevation"/>
    <property type="evidence" value="ECO:0000315"/>
    <property type="project" value="CGD"/>
</dbReference>
<dbReference type="GO" id="GO:0015848">
    <property type="term" value="P:spermidine transport"/>
    <property type="evidence" value="ECO:0000315"/>
    <property type="project" value="CGD"/>
</dbReference>
<dbReference type="GO" id="GO:0055085">
    <property type="term" value="P:transmembrane transport"/>
    <property type="evidence" value="ECO:0000318"/>
    <property type="project" value="GO_Central"/>
</dbReference>
<dbReference type="FunFam" id="1.20.1730.10:FF:000048">
    <property type="entry name" value="Urea transporter, putative"/>
    <property type="match status" value="1"/>
</dbReference>
<dbReference type="Gene3D" id="1.20.1730.10">
    <property type="entry name" value="Sodium/glucose cotransporter"/>
    <property type="match status" value="1"/>
</dbReference>
<dbReference type="InterPro" id="IPR038377">
    <property type="entry name" value="Na/Glc_symporter_sf"/>
</dbReference>
<dbReference type="InterPro" id="IPR001734">
    <property type="entry name" value="Na/solute_symporter"/>
</dbReference>
<dbReference type="InterPro" id="IPR050277">
    <property type="entry name" value="Sodium:Solute_Symporter"/>
</dbReference>
<dbReference type="PANTHER" id="PTHR48086:SF10">
    <property type="entry name" value="AGR155CP"/>
    <property type="match status" value="1"/>
</dbReference>
<dbReference type="PANTHER" id="PTHR48086">
    <property type="entry name" value="SODIUM/PROLINE SYMPORTER-RELATED"/>
    <property type="match status" value="1"/>
</dbReference>
<dbReference type="Pfam" id="PF00474">
    <property type="entry name" value="SSF"/>
    <property type="match status" value="1"/>
</dbReference>
<dbReference type="PROSITE" id="PS50283">
    <property type="entry name" value="NA_SOLUT_SYMP_3"/>
    <property type="match status" value="1"/>
</dbReference>
<sequence length="521" mass="56592">MAQLSSQGNNAIIYLSYAFMLATGLFLAWKFSSNKDFLSSNGTQRGIPLALNFVASAMGVGIITTYAQIANIAGLHGLLVYTICGAIPIVGFAVVGPVIRRKCPDGFILTEWVRHRFGMVTALYLSAFTCLTMFLFMVGELSAIRSAIETLTGLNALGAVIVECVVTTIYTFFGGFRVSFITDNFQGVCVLLLLIICAAGMGSYIEIDTSKIGPSGLLKANKLGWQLVYILFVAIVTNDCFMSGFWLRTFASKTDKDLWIGTSIAAFVTFAICTLIGTTGFLAVWSGDLIVGDENGYDAFFILLSKMPRWLVAFVLIFCIVLSTCTFDSLQSAMVSTISNDVFRNKLHINYVRIMLILIMVPIVVLAVKVADNILQIYLIADLVSAAIIPSVFLGLADTWFWYLRGFDVMAGGLGALLGVFIFGTVYYHSAREGGKLLLIWNGLYDSSDWGPFGAFVIAPVGGVIITLASAALRIAVLYAYSKVTGKEFTALDKPVTVEVENQDHTYGSIDDDESDTKKVV</sequence>
<evidence type="ECO:0000255" key="1"/>
<evidence type="ECO:0000255" key="2">
    <source>
        <dbReference type="PROSITE-ProRule" id="PRU00498"/>
    </source>
</evidence>
<evidence type="ECO:0000269" key="3">
    <source>
    </source>
</evidence>
<evidence type="ECO:0000269" key="4">
    <source>
    </source>
</evidence>
<evidence type="ECO:0000269" key="5">
    <source>
    </source>
</evidence>
<evidence type="ECO:0000303" key="6">
    <source>
    </source>
</evidence>
<evidence type="ECO:0000305" key="7"/>
<protein>
    <recommendedName>
        <fullName evidence="6">Spermidine transporter DUR31</fullName>
    </recommendedName>
</protein>
<gene>
    <name evidence="6" type="primary">DUR31</name>
    <name type="ordered locus">CAALFM_C503480CA</name>
    <name type="ordered locus">orf19.6656</name>
</gene>
<accession>A0A1D8PNR5</accession>
<feature type="chain" id="PRO_0000459183" description="Spermidine transporter DUR31">
    <location>
        <begin position="1"/>
        <end position="521"/>
    </location>
</feature>
<feature type="transmembrane region" description="Helical" evidence="1">
    <location>
        <begin position="11"/>
        <end position="31"/>
    </location>
</feature>
<feature type="transmembrane region" description="Helical" evidence="1">
    <location>
        <begin position="47"/>
        <end position="67"/>
    </location>
</feature>
<feature type="transmembrane region" description="Helical" evidence="1">
    <location>
        <begin position="79"/>
        <end position="99"/>
    </location>
</feature>
<feature type="transmembrane region" description="Helical" evidence="1">
    <location>
        <begin position="117"/>
        <end position="137"/>
    </location>
</feature>
<feature type="transmembrane region" description="Helical" evidence="1">
    <location>
        <begin position="156"/>
        <end position="176"/>
    </location>
</feature>
<feature type="transmembrane region" description="Helical" evidence="1">
    <location>
        <begin position="187"/>
        <end position="207"/>
    </location>
</feature>
<feature type="transmembrane region" description="Helical" evidence="1">
    <location>
        <begin position="227"/>
        <end position="247"/>
    </location>
</feature>
<feature type="transmembrane region" description="Helical" evidence="1">
    <location>
        <begin position="264"/>
        <end position="284"/>
    </location>
</feature>
<feature type="transmembrane region" description="Helical" evidence="1">
    <location>
        <begin position="310"/>
        <end position="330"/>
    </location>
</feature>
<feature type="transmembrane region" description="Helical" evidence="1">
    <location>
        <begin position="354"/>
        <end position="374"/>
    </location>
</feature>
<feature type="transmembrane region" description="Helical" evidence="1">
    <location>
        <begin position="377"/>
        <end position="397"/>
    </location>
</feature>
<feature type="transmembrane region" description="Helical" evidence="1">
    <location>
        <begin position="406"/>
        <end position="426"/>
    </location>
</feature>
<feature type="transmembrane region" description="Helical" evidence="1">
    <location>
        <begin position="453"/>
        <end position="473"/>
    </location>
</feature>
<feature type="glycosylation site" description="N-linked (GlcNAc...) asparagine" evidence="2">
    <location>
        <position position="41"/>
    </location>
</feature>
<keyword id="KW-0325">Glycoprotein</keyword>
<keyword id="KW-0472">Membrane</keyword>
<keyword id="KW-1185">Reference proteome</keyword>
<keyword id="KW-0812">Transmembrane</keyword>
<keyword id="KW-1133">Transmembrane helix</keyword>
<keyword id="KW-0813">Transport</keyword>
<name>DUR31_CANAL</name>
<proteinExistence type="inferred from homology"/>
<comment type="function">
    <text evidence="3 4 5">Spermidine transporter that is also used by salivary gland-secreted histatin 5 (Hst 5) to enter into candidal cells (PubMed:22033918, PubMed:23613860, PubMed:24247141). A major component of host nonimmune defense systems is salivary histatins, a family of small (3-4 kDa), histidine-rich, cationic proteins secreted by major salivary glands in humans and higher primates. Hst 5 is the most potent of the 12 histatin family members and has fungicidal activity against blastoconidial and filamentous forms of Candida albicans (PubMed:22033918). DUR31 only functions under high concentrations of Hst 5 (PubMed:22033918). Hst 5 cojugates to spermidine to be uptaken by DUR31 (PubMed:24247141).</text>
</comment>
<comment type="catalytic activity">
    <reaction evidence="3">
        <text>spermidine(in) = spermidine(out)</text>
        <dbReference type="Rhea" id="RHEA:35039"/>
        <dbReference type="ChEBI" id="CHEBI:57834"/>
    </reaction>
    <physiologicalReaction direction="right-to-left" evidence="3">
        <dbReference type="Rhea" id="RHEA:35041"/>
    </physiologicalReaction>
</comment>
<comment type="subcellular location">
    <subcellularLocation>
        <location evidence="1">Membrane</location>
        <topology evidence="1">Multi-pass membrane protein</topology>
    </subcellularLocation>
</comment>
<comment type="disruption phenotype">
    <text evidence="3 5">Decreases spermidine uptake (PubMed:22033918). Does not affect significantly salivary gland-secreted histatin 5 (Hst 5) mediated killing (PubMed:22033918, PubMed:24247141).</text>
</comment>
<comment type="similarity">
    <text evidence="7">Belongs to the sodium:solute symporter (SSF) (TC 2.A.21) family.</text>
</comment>